<keyword id="KW-1015">Disulfide bond</keyword>
<keyword id="KW-0325">Glycoprotein</keyword>
<keyword id="KW-0472">Membrane</keyword>
<keyword id="KW-1185">Reference proteome</keyword>
<keyword id="KW-0732">Signal</keyword>
<keyword id="KW-0812">Transmembrane</keyword>
<keyword id="KW-1133">Transmembrane helix</keyword>
<accession>Q28475</accession>
<feature type="signal peptide" evidence="3">
    <location>
        <begin position="1"/>
        <end position="23"/>
    </location>
</feature>
<feature type="propeptide" id="PRO_0000029054" evidence="1">
    <location>
        <begin position="24"/>
        <end position="176"/>
    </location>
</feature>
<feature type="chain" id="PRO_0000029055" description="Disintegrin and metalloproteinase domain-containing protein 7">
    <location>
        <begin position="177"/>
        <end position="776"/>
    </location>
</feature>
<feature type="topological domain" description="Extracellular" evidence="3">
    <location>
        <begin position="26"/>
        <end position="669"/>
    </location>
</feature>
<feature type="transmembrane region" description="Helical" evidence="3">
    <location>
        <begin position="670"/>
        <end position="690"/>
    </location>
</feature>
<feature type="topological domain" description="Cytoplasmic" evidence="3">
    <location>
        <begin position="691"/>
        <end position="776"/>
    </location>
</feature>
<feature type="domain" description="Peptidase M12B" evidence="5">
    <location>
        <begin position="199"/>
        <end position="394"/>
    </location>
</feature>
<feature type="domain" description="Disintegrin" evidence="4">
    <location>
        <begin position="402"/>
        <end position="488"/>
    </location>
</feature>
<feature type="region of interest" description="Disordered" evidence="6">
    <location>
        <begin position="757"/>
        <end position="776"/>
    </location>
</feature>
<feature type="glycosylation site" description="N-linked (GlcNAc...) asparagine" evidence="3">
    <location>
        <position position="84"/>
    </location>
</feature>
<feature type="glycosylation site" description="N-linked (GlcNAc...) asparagine" evidence="3">
    <location>
        <position position="167"/>
    </location>
</feature>
<feature type="glycosylation site" description="N-linked (GlcNAc...) asparagine" evidence="3">
    <location>
        <position position="174"/>
    </location>
</feature>
<feature type="glycosylation site" description="N-linked (GlcNAc...) asparagine" evidence="3">
    <location>
        <position position="584"/>
    </location>
</feature>
<feature type="glycosylation site" description="N-linked (GlcNAc...) asparagine" evidence="3">
    <location>
        <position position="629"/>
    </location>
</feature>
<feature type="glycosylation site" description="N-linked (GlcNAc...) asparagine" evidence="3">
    <location>
        <position position="665"/>
    </location>
</feature>
<feature type="disulfide bond" evidence="1">
    <location>
        <begin position="310"/>
        <end position="389"/>
    </location>
</feature>
<feature type="disulfide bond" evidence="1">
    <location>
        <begin position="350"/>
        <end position="373"/>
    </location>
</feature>
<feature type="disulfide bond" evidence="1">
    <location>
        <begin position="352"/>
        <end position="357"/>
    </location>
</feature>
<feature type="disulfide bond" evidence="1">
    <location>
        <begin position="460"/>
        <end position="480"/>
    </location>
</feature>
<sequence>MLPGCIFLMILLILQVKEKVILGVEGQQLVYPKKLPLMQKRDIGHTHDDDIEETYEEELMYEIKLNRKTLVLHLLRSREFLGSNYSETFYSMKGEAFTRHLQIMDHCFYQGSIVHEYDSAASISTCNGLRGFFRVNDQRYLIEPVKYSDEGEHLVFKYNPRVPYVANYSCTELNFTRKTVPGDTESEGDPKMKAIHNEKYIELFIVADDTVYRRNSHPHNKLRNRIWGMVNFVNMIYKTLNIHVTLVGIEIWTHEDKIELHSNIETTLLRFSSWQERILKTRKDFDHVVLLSGKWIYTHVQGISYPAGMCLPYYSTSIIKDLLPDTNIIANRMAHQLGHNLGMQHDEFPCTCPSGKCVMDSDGSIPALKFSKCSQNQYHQYLKDYKPTCMLNIPFPCNFDDFQFCGNKKLDEGEECDCGPPQECTNPCCDAHTCVLKPGFTCAEGECCESCQIKKAGSICRPAEDECDFPEMCTGHSPACPKDQFRVNGFPCKNSEGYCFMGKCPTRRDQCSELFDDEATESHDICYKMNTKGNKFGYCKNKENRFLPCEEKDVRCGKIYCTGGELSYLLGEDKTYHLKDPQQNATVKCKTIFLYHDSTDIGLVASGTKCGDGMVCNNGECLNMEKVYNSTNCPSQCHENPMDDHGLQCHCEEGQAPVAWEETLNVTNVAILIVVLVLVIVGIGVLILLIRYQKCIKLKQVQSPPIETLGVENKGYFGDEQQMRTEPILPEIHFLNQRTPESLESLPTSFSSPHYITLKPASKDSRGIADPNQSAK</sequence>
<gene>
    <name type="primary">ADAM7</name>
    <name type="synonym">EAPI</name>
</gene>
<name>ADAM7_MACFA</name>
<dbReference type="EMBL" id="X66139">
    <property type="protein sequence ID" value="CAA46929.1"/>
    <property type="molecule type" value="mRNA"/>
</dbReference>
<dbReference type="PIR" id="S28258">
    <property type="entry name" value="S28258"/>
</dbReference>
<dbReference type="SMR" id="Q28475"/>
<dbReference type="STRING" id="9541.ENSMFAP00000027769"/>
<dbReference type="MEROPS" id="M12.956"/>
<dbReference type="GlyCosmos" id="Q28475">
    <property type="glycosylation" value="6 sites, No reported glycans"/>
</dbReference>
<dbReference type="eggNOG" id="KOG3607">
    <property type="taxonomic scope" value="Eukaryota"/>
</dbReference>
<dbReference type="Proteomes" id="UP000233100">
    <property type="component" value="Unplaced"/>
</dbReference>
<dbReference type="GO" id="GO:0005886">
    <property type="term" value="C:plasma membrane"/>
    <property type="evidence" value="ECO:0007669"/>
    <property type="project" value="TreeGrafter"/>
</dbReference>
<dbReference type="GO" id="GO:0004222">
    <property type="term" value="F:metalloendopeptidase activity"/>
    <property type="evidence" value="ECO:0007669"/>
    <property type="project" value="InterPro"/>
</dbReference>
<dbReference type="GO" id="GO:1905867">
    <property type="term" value="P:epididymis development"/>
    <property type="evidence" value="ECO:0000250"/>
    <property type="project" value="UniProtKB"/>
</dbReference>
<dbReference type="GO" id="GO:0003382">
    <property type="term" value="P:epithelial cell morphogenesis"/>
    <property type="evidence" value="ECO:0000250"/>
    <property type="project" value="UniProtKB"/>
</dbReference>
<dbReference type="GO" id="GO:1902093">
    <property type="term" value="P:positive regulation of flagellated sperm motility"/>
    <property type="evidence" value="ECO:0000250"/>
    <property type="project" value="UniProtKB"/>
</dbReference>
<dbReference type="GO" id="GO:1902492">
    <property type="term" value="P:positive regulation of sperm capacitation"/>
    <property type="evidence" value="ECO:0000250"/>
    <property type="project" value="UniProtKB"/>
</dbReference>
<dbReference type="GO" id="GO:0006508">
    <property type="term" value="P:proteolysis"/>
    <property type="evidence" value="ECO:0007669"/>
    <property type="project" value="InterPro"/>
</dbReference>
<dbReference type="CDD" id="cd04269">
    <property type="entry name" value="ZnMc_adamalysin_II_like"/>
    <property type="match status" value="1"/>
</dbReference>
<dbReference type="FunFam" id="3.40.390.10:FF:000002">
    <property type="entry name" value="Disintegrin and metalloproteinase domain-containing protein 22"/>
    <property type="match status" value="1"/>
</dbReference>
<dbReference type="FunFam" id="4.10.70.10:FF:000001">
    <property type="entry name" value="Disintegrin and metalloproteinase domain-containing protein 22"/>
    <property type="match status" value="1"/>
</dbReference>
<dbReference type="Gene3D" id="3.40.390.10">
    <property type="entry name" value="Collagenase (Catalytic Domain)"/>
    <property type="match status" value="1"/>
</dbReference>
<dbReference type="Gene3D" id="4.10.70.10">
    <property type="entry name" value="Disintegrin domain"/>
    <property type="match status" value="1"/>
</dbReference>
<dbReference type="InterPro" id="IPR006586">
    <property type="entry name" value="ADAM_Cys-rich"/>
</dbReference>
<dbReference type="InterPro" id="IPR018358">
    <property type="entry name" value="Disintegrin_CS"/>
</dbReference>
<dbReference type="InterPro" id="IPR001762">
    <property type="entry name" value="Disintegrin_dom"/>
</dbReference>
<dbReference type="InterPro" id="IPR036436">
    <property type="entry name" value="Disintegrin_dom_sf"/>
</dbReference>
<dbReference type="InterPro" id="IPR024079">
    <property type="entry name" value="MetalloPept_cat_dom_sf"/>
</dbReference>
<dbReference type="InterPro" id="IPR001590">
    <property type="entry name" value="Peptidase_M12B"/>
</dbReference>
<dbReference type="InterPro" id="IPR002870">
    <property type="entry name" value="Peptidase_M12B_N"/>
</dbReference>
<dbReference type="InterPro" id="IPR034027">
    <property type="entry name" value="Reprolysin_adamalysin"/>
</dbReference>
<dbReference type="PANTHER" id="PTHR11905">
    <property type="entry name" value="ADAM A DISINTEGRIN AND METALLOPROTEASE DOMAIN"/>
    <property type="match status" value="1"/>
</dbReference>
<dbReference type="PANTHER" id="PTHR11905:SF21">
    <property type="entry name" value="DISINTEGRIN AND METALLOPROTEINASE DOMAIN-CONTAINING PROTEIN 7"/>
    <property type="match status" value="1"/>
</dbReference>
<dbReference type="Pfam" id="PF08516">
    <property type="entry name" value="ADAM_CR"/>
    <property type="match status" value="1"/>
</dbReference>
<dbReference type="Pfam" id="PF00200">
    <property type="entry name" value="Disintegrin"/>
    <property type="match status" value="1"/>
</dbReference>
<dbReference type="Pfam" id="PF01562">
    <property type="entry name" value="Pep_M12B_propep"/>
    <property type="match status" value="1"/>
</dbReference>
<dbReference type="Pfam" id="PF01421">
    <property type="entry name" value="Reprolysin"/>
    <property type="match status" value="1"/>
</dbReference>
<dbReference type="PRINTS" id="PR00289">
    <property type="entry name" value="DISINTEGRIN"/>
</dbReference>
<dbReference type="SMART" id="SM00608">
    <property type="entry name" value="ACR"/>
    <property type="match status" value="1"/>
</dbReference>
<dbReference type="SMART" id="SM00050">
    <property type="entry name" value="DISIN"/>
    <property type="match status" value="1"/>
</dbReference>
<dbReference type="SUPFAM" id="SSF57552">
    <property type="entry name" value="Blood coagulation inhibitor (disintegrin)"/>
    <property type="match status" value="1"/>
</dbReference>
<dbReference type="SUPFAM" id="SSF55486">
    <property type="entry name" value="Metalloproteases ('zincins'), catalytic domain"/>
    <property type="match status" value="1"/>
</dbReference>
<dbReference type="PROSITE" id="PS50215">
    <property type="entry name" value="ADAM_MEPRO"/>
    <property type="match status" value="1"/>
</dbReference>
<dbReference type="PROSITE" id="PS00427">
    <property type="entry name" value="DISINTEGRIN_1"/>
    <property type="match status" value="1"/>
</dbReference>
<dbReference type="PROSITE" id="PS50214">
    <property type="entry name" value="DISINTEGRIN_2"/>
    <property type="match status" value="1"/>
</dbReference>
<organism>
    <name type="scientific">Macaca fascicularis</name>
    <name type="common">Crab-eating macaque</name>
    <name type="synonym">Cynomolgus monkey</name>
    <dbReference type="NCBI Taxonomy" id="9541"/>
    <lineage>
        <taxon>Eukaryota</taxon>
        <taxon>Metazoa</taxon>
        <taxon>Chordata</taxon>
        <taxon>Craniata</taxon>
        <taxon>Vertebrata</taxon>
        <taxon>Euteleostomi</taxon>
        <taxon>Mammalia</taxon>
        <taxon>Eutheria</taxon>
        <taxon>Euarchontoglires</taxon>
        <taxon>Primates</taxon>
        <taxon>Haplorrhini</taxon>
        <taxon>Catarrhini</taxon>
        <taxon>Cercopithecidae</taxon>
        <taxon>Cercopithecinae</taxon>
        <taxon>Macaca</taxon>
    </lineage>
</organism>
<reference key="1">
    <citation type="journal article" date="1992" name="Biochem. J.">
        <title>A mammalian epididymal protein with remarkable sequence similarity to snake venom haemorrhagic peptides.</title>
        <authorList>
            <person name="Perry A.C.F."/>
            <person name="Jones R."/>
            <person name="Barker P.J."/>
            <person name="Hall L."/>
        </authorList>
    </citation>
    <scope>NUCLEOTIDE SEQUENCE [MRNA]</scope>
    <source>
        <tissue>Epididymis</tissue>
    </source>
</reference>
<comment type="function">
    <text evidence="2">Required for normal male fertility via maintenance of epithelial cell morphology in the caput epididymis and subsequently correct epididymis lumen structure required for sperm development (By similarity). Plays a role in sperm motility, flagella morphology and tyrosine phosphorylation during sperm capacitance (By similarity). Plays a role in normal expression levels of HSPA5, ITM2B and ADAM2 in sperm both prior to and post-capacitation (By similarity). This is a non catalytic metalloprotease-like protein (By similarity).</text>
</comment>
<comment type="subunit">
    <text evidence="2">Interacts with ITM2B in sperm; the interaction increases following capacitation (By similarity). Interacts with HSPA5 and CANX (By similarity).</text>
</comment>
<comment type="subcellular location">
    <subcellularLocation>
        <location evidence="7">Membrane</location>
        <topology evidence="3">Single-pass type I membrane protein</topology>
    </subcellularLocation>
</comment>
<proteinExistence type="evidence at transcript level"/>
<evidence type="ECO:0000250" key="1"/>
<evidence type="ECO:0000250" key="2">
    <source>
        <dbReference type="UniProtKB" id="O35227"/>
    </source>
</evidence>
<evidence type="ECO:0000255" key="3"/>
<evidence type="ECO:0000255" key="4">
    <source>
        <dbReference type="PROSITE-ProRule" id="PRU00068"/>
    </source>
</evidence>
<evidence type="ECO:0000255" key="5">
    <source>
        <dbReference type="PROSITE-ProRule" id="PRU00276"/>
    </source>
</evidence>
<evidence type="ECO:0000256" key="6">
    <source>
        <dbReference type="SAM" id="MobiDB-lite"/>
    </source>
</evidence>
<evidence type="ECO:0000305" key="7"/>
<protein>
    <recommendedName>
        <fullName>Disintegrin and metalloproteinase domain-containing protein 7</fullName>
        <shortName>ADAM 7</shortName>
    </recommendedName>
    <alternativeName>
        <fullName>Epididymal apical protein I</fullName>
        <shortName>EAP I</shortName>
    </alternativeName>
</protein>